<dbReference type="EC" id="1.17.7.4" evidence="1"/>
<dbReference type="EMBL" id="CP000027">
    <property type="protein sequence ID" value="AAW39426.1"/>
    <property type="molecule type" value="Genomic_DNA"/>
</dbReference>
<dbReference type="RefSeq" id="WP_010937032.1">
    <property type="nucleotide sequence ID" value="NC_002936.3"/>
</dbReference>
<dbReference type="SMR" id="Q3Z6U4"/>
<dbReference type="FunCoup" id="Q3Z6U4">
    <property type="interactions" value="237"/>
</dbReference>
<dbReference type="STRING" id="243164.DET1344"/>
<dbReference type="GeneID" id="3229386"/>
<dbReference type="KEGG" id="det:DET1344"/>
<dbReference type="PATRIC" id="fig|243164.10.peg.1273"/>
<dbReference type="eggNOG" id="COG0761">
    <property type="taxonomic scope" value="Bacteria"/>
</dbReference>
<dbReference type="HOGENOM" id="CLU_027486_0_1_0"/>
<dbReference type="InParanoid" id="Q3Z6U4"/>
<dbReference type="UniPathway" id="UPA00056">
    <property type="reaction ID" value="UER00097"/>
</dbReference>
<dbReference type="UniPathway" id="UPA00059">
    <property type="reaction ID" value="UER00105"/>
</dbReference>
<dbReference type="Proteomes" id="UP000008289">
    <property type="component" value="Chromosome"/>
</dbReference>
<dbReference type="GO" id="GO:0051539">
    <property type="term" value="F:4 iron, 4 sulfur cluster binding"/>
    <property type="evidence" value="ECO:0007669"/>
    <property type="project" value="UniProtKB-UniRule"/>
</dbReference>
<dbReference type="GO" id="GO:0051745">
    <property type="term" value="F:4-hydroxy-3-methylbut-2-enyl diphosphate reductase activity"/>
    <property type="evidence" value="ECO:0007669"/>
    <property type="project" value="UniProtKB-UniRule"/>
</dbReference>
<dbReference type="GO" id="GO:0046872">
    <property type="term" value="F:metal ion binding"/>
    <property type="evidence" value="ECO:0007669"/>
    <property type="project" value="UniProtKB-KW"/>
</dbReference>
<dbReference type="GO" id="GO:0050992">
    <property type="term" value="P:dimethylallyl diphosphate biosynthetic process"/>
    <property type="evidence" value="ECO:0007669"/>
    <property type="project" value="UniProtKB-UniRule"/>
</dbReference>
<dbReference type="GO" id="GO:0019288">
    <property type="term" value="P:isopentenyl diphosphate biosynthetic process, methylerythritol 4-phosphate pathway"/>
    <property type="evidence" value="ECO:0007669"/>
    <property type="project" value="UniProtKB-UniRule"/>
</dbReference>
<dbReference type="GO" id="GO:0016114">
    <property type="term" value="P:terpenoid biosynthetic process"/>
    <property type="evidence" value="ECO:0007669"/>
    <property type="project" value="UniProtKB-UniRule"/>
</dbReference>
<dbReference type="CDD" id="cd13944">
    <property type="entry name" value="lytB_ispH"/>
    <property type="match status" value="1"/>
</dbReference>
<dbReference type="Gene3D" id="3.40.50.11270">
    <property type="match status" value="1"/>
</dbReference>
<dbReference type="Gene3D" id="3.40.1010.20">
    <property type="entry name" value="4-hydroxy-3-methylbut-2-enyl diphosphate reductase, catalytic domain"/>
    <property type="match status" value="2"/>
</dbReference>
<dbReference type="HAMAP" id="MF_00191">
    <property type="entry name" value="IspH"/>
    <property type="match status" value="1"/>
</dbReference>
<dbReference type="InterPro" id="IPR003451">
    <property type="entry name" value="LytB/IspH"/>
</dbReference>
<dbReference type="NCBIfam" id="TIGR00216">
    <property type="entry name" value="ispH_lytB"/>
    <property type="match status" value="1"/>
</dbReference>
<dbReference type="PANTHER" id="PTHR30426">
    <property type="entry name" value="4-HYDROXY-3-METHYLBUT-2-ENYL DIPHOSPHATE REDUCTASE"/>
    <property type="match status" value="1"/>
</dbReference>
<dbReference type="PANTHER" id="PTHR30426:SF0">
    <property type="entry name" value="4-HYDROXY-3-METHYLBUT-2-ENYL DIPHOSPHATE REDUCTASE"/>
    <property type="match status" value="1"/>
</dbReference>
<dbReference type="Pfam" id="PF02401">
    <property type="entry name" value="LYTB"/>
    <property type="match status" value="1"/>
</dbReference>
<sequence>MKVECASNIGFCFGVRRAINILEKTAAEKGGVETLGALVHNQQVLNRLSGMGVRVVKNIEDISGRTVAISSHGVGPLVLDELKSKGLEVVDTTCPFVKRAQVAAKRFHDAGFFTVIYGDVNHPEVKGIMGWAGGDGLATLNPQGLVDVPDVSRYIGVLSQTTQIPTGFTSFVKNVIDQALVKDAEIRIADTLCHDIRERQTAALELAGRVDLMLVIGGHNSANTRHLLDLCKTVSNTYLIETASELQTGWLRGVNRIGITSGASTDETTISEVCSYLGSLSAGT</sequence>
<evidence type="ECO:0000255" key="1">
    <source>
        <dbReference type="HAMAP-Rule" id="MF_00191"/>
    </source>
</evidence>
<accession>Q3Z6U4</accession>
<comment type="function">
    <text evidence="1">Catalyzes the conversion of 1-hydroxy-2-methyl-2-(E)-butenyl 4-diphosphate (HMBPP) into a mixture of isopentenyl diphosphate (IPP) and dimethylallyl diphosphate (DMAPP). Acts in the terminal step of the DOXP/MEP pathway for isoprenoid precursor biosynthesis.</text>
</comment>
<comment type="catalytic activity">
    <reaction evidence="1">
        <text>isopentenyl diphosphate + 2 oxidized [2Fe-2S]-[ferredoxin] + H2O = (2E)-4-hydroxy-3-methylbut-2-enyl diphosphate + 2 reduced [2Fe-2S]-[ferredoxin] + 2 H(+)</text>
        <dbReference type="Rhea" id="RHEA:24488"/>
        <dbReference type="Rhea" id="RHEA-COMP:10000"/>
        <dbReference type="Rhea" id="RHEA-COMP:10001"/>
        <dbReference type="ChEBI" id="CHEBI:15377"/>
        <dbReference type="ChEBI" id="CHEBI:15378"/>
        <dbReference type="ChEBI" id="CHEBI:33737"/>
        <dbReference type="ChEBI" id="CHEBI:33738"/>
        <dbReference type="ChEBI" id="CHEBI:128753"/>
        <dbReference type="ChEBI" id="CHEBI:128769"/>
        <dbReference type="EC" id="1.17.7.4"/>
    </reaction>
</comment>
<comment type="catalytic activity">
    <reaction evidence="1">
        <text>dimethylallyl diphosphate + 2 oxidized [2Fe-2S]-[ferredoxin] + H2O = (2E)-4-hydroxy-3-methylbut-2-enyl diphosphate + 2 reduced [2Fe-2S]-[ferredoxin] + 2 H(+)</text>
        <dbReference type="Rhea" id="RHEA:24825"/>
        <dbReference type="Rhea" id="RHEA-COMP:10000"/>
        <dbReference type="Rhea" id="RHEA-COMP:10001"/>
        <dbReference type="ChEBI" id="CHEBI:15377"/>
        <dbReference type="ChEBI" id="CHEBI:15378"/>
        <dbReference type="ChEBI" id="CHEBI:33737"/>
        <dbReference type="ChEBI" id="CHEBI:33738"/>
        <dbReference type="ChEBI" id="CHEBI:57623"/>
        <dbReference type="ChEBI" id="CHEBI:128753"/>
        <dbReference type="EC" id="1.17.7.4"/>
    </reaction>
</comment>
<comment type="cofactor">
    <cofactor evidence="1">
        <name>[4Fe-4S] cluster</name>
        <dbReference type="ChEBI" id="CHEBI:49883"/>
    </cofactor>
    <text evidence="1">Binds 1 [4Fe-4S] cluster per subunit.</text>
</comment>
<comment type="pathway">
    <text evidence="1">Isoprenoid biosynthesis; dimethylallyl diphosphate biosynthesis; dimethylallyl diphosphate from (2E)-4-hydroxy-3-methylbutenyl diphosphate: step 1/1.</text>
</comment>
<comment type="pathway">
    <text evidence="1">Isoprenoid biosynthesis; isopentenyl diphosphate biosynthesis via DXP pathway; isopentenyl diphosphate from 1-deoxy-D-xylulose 5-phosphate: step 6/6.</text>
</comment>
<comment type="similarity">
    <text evidence="1">Belongs to the IspH family.</text>
</comment>
<proteinExistence type="inferred from homology"/>
<gene>
    <name evidence="1" type="primary">ispH</name>
    <name type="ordered locus">DET1344</name>
</gene>
<name>ISPH_DEHM1</name>
<protein>
    <recommendedName>
        <fullName evidence="1">4-hydroxy-3-methylbut-2-enyl diphosphate reductase</fullName>
        <shortName evidence="1">HMBPP reductase</shortName>
        <ecNumber evidence="1">1.17.7.4</ecNumber>
    </recommendedName>
</protein>
<feature type="chain" id="PRO_1000021112" description="4-hydroxy-3-methylbut-2-enyl diphosphate reductase">
    <location>
        <begin position="1"/>
        <end position="284"/>
    </location>
</feature>
<feature type="active site" description="Proton donor" evidence="1">
    <location>
        <position position="124"/>
    </location>
</feature>
<feature type="binding site" evidence="1">
    <location>
        <position position="12"/>
    </location>
    <ligand>
        <name>[4Fe-4S] cluster</name>
        <dbReference type="ChEBI" id="CHEBI:49883"/>
    </ligand>
</feature>
<feature type="binding site" evidence="1">
    <location>
        <position position="40"/>
    </location>
    <ligand>
        <name>(2E)-4-hydroxy-3-methylbut-2-enyl diphosphate</name>
        <dbReference type="ChEBI" id="CHEBI:128753"/>
    </ligand>
</feature>
<feature type="binding site" evidence="1">
    <location>
        <position position="40"/>
    </location>
    <ligand>
        <name>dimethylallyl diphosphate</name>
        <dbReference type="ChEBI" id="CHEBI:57623"/>
    </ligand>
</feature>
<feature type="binding site" evidence="1">
    <location>
        <position position="40"/>
    </location>
    <ligand>
        <name>isopentenyl diphosphate</name>
        <dbReference type="ChEBI" id="CHEBI:128769"/>
    </ligand>
</feature>
<feature type="binding site" evidence="1">
    <location>
        <position position="72"/>
    </location>
    <ligand>
        <name>(2E)-4-hydroxy-3-methylbut-2-enyl diphosphate</name>
        <dbReference type="ChEBI" id="CHEBI:128753"/>
    </ligand>
</feature>
<feature type="binding site" evidence="1">
    <location>
        <position position="72"/>
    </location>
    <ligand>
        <name>dimethylallyl diphosphate</name>
        <dbReference type="ChEBI" id="CHEBI:57623"/>
    </ligand>
</feature>
<feature type="binding site" evidence="1">
    <location>
        <position position="72"/>
    </location>
    <ligand>
        <name>isopentenyl diphosphate</name>
        <dbReference type="ChEBI" id="CHEBI:128769"/>
    </ligand>
</feature>
<feature type="binding site" evidence="1">
    <location>
        <position position="94"/>
    </location>
    <ligand>
        <name>[4Fe-4S] cluster</name>
        <dbReference type="ChEBI" id="CHEBI:49883"/>
    </ligand>
</feature>
<feature type="binding site" evidence="1">
    <location>
        <position position="122"/>
    </location>
    <ligand>
        <name>(2E)-4-hydroxy-3-methylbut-2-enyl diphosphate</name>
        <dbReference type="ChEBI" id="CHEBI:128753"/>
    </ligand>
</feature>
<feature type="binding site" evidence="1">
    <location>
        <position position="122"/>
    </location>
    <ligand>
        <name>dimethylallyl diphosphate</name>
        <dbReference type="ChEBI" id="CHEBI:57623"/>
    </ligand>
</feature>
<feature type="binding site" evidence="1">
    <location>
        <position position="122"/>
    </location>
    <ligand>
        <name>isopentenyl diphosphate</name>
        <dbReference type="ChEBI" id="CHEBI:128769"/>
    </ligand>
</feature>
<feature type="binding site" evidence="1">
    <location>
        <position position="161"/>
    </location>
    <ligand>
        <name>(2E)-4-hydroxy-3-methylbut-2-enyl diphosphate</name>
        <dbReference type="ChEBI" id="CHEBI:128753"/>
    </ligand>
</feature>
<feature type="binding site" evidence="1">
    <location>
        <position position="193"/>
    </location>
    <ligand>
        <name>[4Fe-4S] cluster</name>
        <dbReference type="ChEBI" id="CHEBI:49883"/>
    </ligand>
</feature>
<feature type="binding site" evidence="1">
    <location>
        <position position="221"/>
    </location>
    <ligand>
        <name>(2E)-4-hydroxy-3-methylbut-2-enyl diphosphate</name>
        <dbReference type="ChEBI" id="CHEBI:128753"/>
    </ligand>
</feature>
<feature type="binding site" evidence="1">
    <location>
        <position position="221"/>
    </location>
    <ligand>
        <name>dimethylallyl diphosphate</name>
        <dbReference type="ChEBI" id="CHEBI:57623"/>
    </ligand>
</feature>
<feature type="binding site" evidence="1">
    <location>
        <position position="221"/>
    </location>
    <ligand>
        <name>isopentenyl diphosphate</name>
        <dbReference type="ChEBI" id="CHEBI:128769"/>
    </ligand>
</feature>
<feature type="binding site" evidence="1">
    <location>
        <position position="223"/>
    </location>
    <ligand>
        <name>(2E)-4-hydroxy-3-methylbut-2-enyl diphosphate</name>
        <dbReference type="ChEBI" id="CHEBI:128753"/>
    </ligand>
</feature>
<feature type="binding site" evidence="1">
    <location>
        <position position="223"/>
    </location>
    <ligand>
        <name>dimethylallyl diphosphate</name>
        <dbReference type="ChEBI" id="CHEBI:57623"/>
    </ligand>
</feature>
<feature type="binding site" evidence="1">
    <location>
        <position position="223"/>
    </location>
    <ligand>
        <name>isopentenyl diphosphate</name>
        <dbReference type="ChEBI" id="CHEBI:128769"/>
    </ligand>
</feature>
<feature type="binding site" evidence="1">
    <location>
        <position position="264"/>
    </location>
    <ligand>
        <name>(2E)-4-hydroxy-3-methylbut-2-enyl diphosphate</name>
        <dbReference type="ChEBI" id="CHEBI:128753"/>
    </ligand>
</feature>
<feature type="binding site" evidence="1">
    <location>
        <position position="264"/>
    </location>
    <ligand>
        <name>dimethylallyl diphosphate</name>
        <dbReference type="ChEBI" id="CHEBI:57623"/>
    </ligand>
</feature>
<feature type="binding site" evidence="1">
    <location>
        <position position="264"/>
    </location>
    <ligand>
        <name>isopentenyl diphosphate</name>
        <dbReference type="ChEBI" id="CHEBI:128769"/>
    </ligand>
</feature>
<reference key="1">
    <citation type="journal article" date="2005" name="Science">
        <title>Genome sequence of the PCE-dechlorinating bacterium Dehalococcoides ethenogenes.</title>
        <authorList>
            <person name="Seshadri R."/>
            <person name="Adrian L."/>
            <person name="Fouts D.E."/>
            <person name="Eisen J.A."/>
            <person name="Phillippy A.M."/>
            <person name="Methe B.A."/>
            <person name="Ward N.L."/>
            <person name="Nelson W.C."/>
            <person name="DeBoy R.T."/>
            <person name="Khouri H.M."/>
            <person name="Kolonay J.F."/>
            <person name="Dodson R.J."/>
            <person name="Daugherty S.C."/>
            <person name="Brinkac L.M."/>
            <person name="Sullivan S.A."/>
            <person name="Madupu R."/>
            <person name="Nelson K.E."/>
            <person name="Kang K.H."/>
            <person name="Impraim M."/>
            <person name="Tran K."/>
            <person name="Robinson J.M."/>
            <person name="Forberger H.A."/>
            <person name="Fraser C.M."/>
            <person name="Zinder S.H."/>
            <person name="Heidelberg J.F."/>
        </authorList>
    </citation>
    <scope>NUCLEOTIDE SEQUENCE [LARGE SCALE GENOMIC DNA]</scope>
    <source>
        <strain>ATCC BAA-2266 / KCTC 15142 / 195</strain>
    </source>
</reference>
<organism>
    <name type="scientific">Dehalococcoides mccartyi (strain ATCC BAA-2266 / KCTC 15142 / 195)</name>
    <name type="common">Dehalococcoides ethenogenes (strain 195)</name>
    <dbReference type="NCBI Taxonomy" id="243164"/>
    <lineage>
        <taxon>Bacteria</taxon>
        <taxon>Bacillati</taxon>
        <taxon>Chloroflexota</taxon>
        <taxon>Dehalococcoidia</taxon>
        <taxon>Dehalococcoidales</taxon>
        <taxon>Dehalococcoidaceae</taxon>
        <taxon>Dehalococcoides</taxon>
    </lineage>
</organism>
<keyword id="KW-0004">4Fe-4S</keyword>
<keyword id="KW-0408">Iron</keyword>
<keyword id="KW-0411">Iron-sulfur</keyword>
<keyword id="KW-0414">Isoprene biosynthesis</keyword>
<keyword id="KW-0479">Metal-binding</keyword>
<keyword id="KW-0560">Oxidoreductase</keyword>